<proteinExistence type="inferred from homology"/>
<protein>
    <recommendedName>
        <fullName evidence="1">Translational regulator CsrA</fullName>
    </recommendedName>
    <alternativeName>
        <fullName evidence="1">Carbon storage regulator</fullName>
    </alternativeName>
</protein>
<name>CSRA_KLEP7</name>
<gene>
    <name evidence="1" type="primary">csrA</name>
    <name type="ordered locus">KPN78578_29680</name>
    <name type="ORF">KPN_03028</name>
</gene>
<organism>
    <name type="scientific">Klebsiella pneumoniae subsp. pneumoniae (strain ATCC 700721 / MGH 78578)</name>
    <dbReference type="NCBI Taxonomy" id="272620"/>
    <lineage>
        <taxon>Bacteria</taxon>
        <taxon>Pseudomonadati</taxon>
        <taxon>Pseudomonadota</taxon>
        <taxon>Gammaproteobacteria</taxon>
        <taxon>Enterobacterales</taxon>
        <taxon>Enterobacteriaceae</taxon>
        <taxon>Klebsiella/Raoultella group</taxon>
        <taxon>Klebsiella</taxon>
        <taxon>Klebsiella pneumoniae complex</taxon>
    </lineage>
</organism>
<reference key="1">
    <citation type="submission" date="2006-09" db="EMBL/GenBank/DDBJ databases">
        <authorList>
            <consortium name="The Klebsiella pneumonia Genome Sequencing Project"/>
            <person name="McClelland M."/>
            <person name="Sanderson E.K."/>
            <person name="Spieth J."/>
            <person name="Clifton W.S."/>
            <person name="Latreille P."/>
            <person name="Sabo A."/>
            <person name="Pepin K."/>
            <person name="Bhonagiri V."/>
            <person name="Porwollik S."/>
            <person name="Ali J."/>
            <person name="Wilson R.K."/>
        </authorList>
    </citation>
    <scope>NUCLEOTIDE SEQUENCE [LARGE SCALE GENOMIC DNA]</scope>
    <source>
        <strain>ATCC 700721 / MGH 78578</strain>
    </source>
</reference>
<keyword id="KW-0010">Activator</keyword>
<keyword id="KW-0963">Cytoplasm</keyword>
<keyword id="KW-0678">Repressor</keyword>
<keyword id="KW-0694">RNA-binding</keyword>
<keyword id="KW-0810">Translation regulation</keyword>
<sequence>MLILTRRVGETLMIGDEVTVTVLGVKGNQVRIGVNAPKEVSVHREEIYQRIQAEKSQQSSY</sequence>
<feature type="chain" id="PRO_1000023392" description="Translational regulator CsrA">
    <location>
        <begin position="1"/>
        <end position="61"/>
    </location>
</feature>
<accession>A6TCV8</accession>
<dbReference type="EMBL" id="CP000647">
    <property type="protein sequence ID" value="ABR78429.1"/>
    <property type="molecule type" value="Genomic_DNA"/>
</dbReference>
<dbReference type="RefSeq" id="WP_000906486.1">
    <property type="nucleotide sequence ID" value="NC_009648.1"/>
</dbReference>
<dbReference type="BMRB" id="A6TCV8"/>
<dbReference type="SMR" id="A6TCV8"/>
<dbReference type="STRING" id="272620.KPN_03028"/>
<dbReference type="jPOST" id="A6TCV8"/>
<dbReference type="PaxDb" id="272620-KPN_03028"/>
<dbReference type="EnsemblBacteria" id="ABR78429">
    <property type="protein sequence ID" value="ABR78429"/>
    <property type="gene ID" value="KPN_03028"/>
</dbReference>
<dbReference type="GeneID" id="98389839"/>
<dbReference type="KEGG" id="kpn:KPN_03028"/>
<dbReference type="HOGENOM" id="CLU_164837_2_1_6"/>
<dbReference type="Proteomes" id="UP000000265">
    <property type="component" value="Chromosome"/>
</dbReference>
<dbReference type="GO" id="GO:0005829">
    <property type="term" value="C:cytosol"/>
    <property type="evidence" value="ECO:0007669"/>
    <property type="project" value="TreeGrafter"/>
</dbReference>
<dbReference type="GO" id="GO:0048027">
    <property type="term" value="F:mRNA 5'-UTR binding"/>
    <property type="evidence" value="ECO:0007669"/>
    <property type="project" value="UniProtKB-UniRule"/>
</dbReference>
<dbReference type="GO" id="GO:0006402">
    <property type="term" value="P:mRNA catabolic process"/>
    <property type="evidence" value="ECO:0007669"/>
    <property type="project" value="InterPro"/>
</dbReference>
<dbReference type="GO" id="GO:0045947">
    <property type="term" value="P:negative regulation of translational initiation"/>
    <property type="evidence" value="ECO:0007669"/>
    <property type="project" value="UniProtKB-UniRule"/>
</dbReference>
<dbReference type="GO" id="GO:0045948">
    <property type="term" value="P:positive regulation of translational initiation"/>
    <property type="evidence" value="ECO:0007669"/>
    <property type="project" value="UniProtKB-UniRule"/>
</dbReference>
<dbReference type="GO" id="GO:0006109">
    <property type="term" value="P:regulation of carbohydrate metabolic process"/>
    <property type="evidence" value="ECO:0007669"/>
    <property type="project" value="UniProtKB-UniRule"/>
</dbReference>
<dbReference type="FunFam" id="2.60.40.4380:FF:000001">
    <property type="entry name" value="Translational regulator CsrA"/>
    <property type="match status" value="1"/>
</dbReference>
<dbReference type="Gene3D" id="2.60.40.4380">
    <property type="entry name" value="Translational regulator CsrA"/>
    <property type="match status" value="1"/>
</dbReference>
<dbReference type="HAMAP" id="MF_00167">
    <property type="entry name" value="CsrA"/>
    <property type="match status" value="1"/>
</dbReference>
<dbReference type="InterPro" id="IPR003751">
    <property type="entry name" value="CsrA"/>
</dbReference>
<dbReference type="InterPro" id="IPR036107">
    <property type="entry name" value="CsrA_sf"/>
</dbReference>
<dbReference type="NCBIfam" id="TIGR00202">
    <property type="entry name" value="csrA"/>
    <property type="match status" value="1"/>
</dbReference>
<dbReference type="NCBIfam" id="NF002469">
    <property type="entry name" value="PRK01712.1"/>
    <property type="match status" value="1"/>
</dbReference>
<dbReference type="PANTHER" id="PTHR34984">
    <property type="entry name" value="CARBON STORAGE REGULATOR"/>
    <property type="match status" value="1"/>
</dbReference>
<dbReference type="PANTHER" id="PTHR34984:SF1">
    <property type="entry name" value="CARBON STORAGE REGULATOR"/>
    <property type="match status" value="1"/>
</dbReference>
<dbReference type="Pfam" id="PF02599">
    <property type="entry name" value="CsrA"/>
    <property type="match status" value="1"/>
</dbReference>
<dbReference type="SUPFAM" id="SSF117130">
    <property type="entry name" value="CsrA-like"/>
    <property type="match status" value="1"/>
</dbReference>
<comment type="function">
    <text evidence="1">A key translational regulator that binds mRNA to regulate translation initiation and/or mRNA stability. Mediates global changes in gene expression, shifting from rapid growth to stress survival by linking envelope stress, the stringent response and the catabolite repression systems. Usually binds in the 5'-UTR; binding at or near the Shine-Dalgarno sequence prevents ribosome-binding, repressing translation, binding elsewhere in the 5'-UTR can activate translation and/or stabilize the mRNA. Its function is antagonized by small RNA(s).</text>
</comment>
<comment type="subunit">
    <text evidence="1">Homodimer; the beta-strands of each monomer intercalate to form a hydrophobic core, while the alpha-helices form wings that extend away from the core.</text>
</comment>
<comment type="subcellular location">
    <subcellularLocation>
        <location evidence="1">Cytoplasm</location>
    </subcellularLocation>
</comment>
<comment type="similarity">
    <text evidence="1">Belongs to the CsrA/RsmA family.</text>
</comment>
<evidence type="ECO:0000255" key="1">
    <source>
        <dbReference type="HAMAP-Rule" id="MF_00167"/>
    </source>
</evidence>